<accession>Q6P2A1</accession>
<accession>A5XCD9</accession>
<gene>
    <name type="primary">prdm9</name>
    <name type="ORF">zgc:63970</name>
</gene>
<name>PRDM9_DANRE</name>
<sequence length="853" mass="97136">MSLSPDLPPSEEQNLEIQGSATNCYSVVIIEEQDDTFNDQPFYCEMCQQHFIDQCETHGPPSFTCDSPAALGTPQRALLTLPQGLVIGRSSISHAGLGVFNQGQTVPLGMHFGPFDGEEISEEKALDSANSWVICRGNNQYSYIDAEKDTHSNWMKFVVCSRSETEQNLVAFQQNGRILFRCCRPISPGQEFRVWYAEEYAQGLGAIWDKIWDNKCISQGSTEEQATQNCPCPFCHYSFPTLVYLHAHVKRTHPNEYAQFTQTHPLESEAHTPITEVEQCLVASDEALSTQTQPVTESPQEQISTQNGQPIHQTENSDEPDASDIYTAAGEISDEIHACVDCGRSFLRSCHLKRHQRTIHSKEKPYCCSQCKKCFSQATGLKRHQHTHQEQEKNIESPDRPSDIYPCTKCTLSFVAKINLHQHLKRHHHGEYLRLVESGSLTAETEEDHTEVCFDKQDPNYEPPSRGRKSTKNSLKGRGCPKKVAVGRPRGRPPKNKNLEVEVQKISPICTNCEQSFSDLETLKTHQCPRRDDEGDNVEHPQEASQYICGECIRAFSNLDLLKAHECIQQGEGSYCCPHCDLYFNRMCNLRRHERTIHSKEKPYCCTVCLKSFTQSSGLKRHQQSHLRRKSHRQSSALFTAAIFPCAYCPFSFTDERYLYKHIRRHHPEMSLKYLSFQEGGVLSVEKPHSCSQCCKSFSTIKGFKNHSCFKQGEKVYLCPDCGKAFSWFNSLKQHQRIHTGEKPYTCSQCGKSFVHSGQLNVHLRTHTGEKPFLCSQCGESFRQSGDLRRHEQKHSGVRPCQCPDCGKSFSRPQSLKAHQQLHVGTKLFPCTQCGKSFTRRYHLTRHHQKMHS</sequence>
<proteinExistence type="evidence at transcript level"/>
<comment type="function">
    <text evidence="1">Histone methyltransferase that sequentially mono-, di-, and tri-methylates both 'Lys-4' (H3K4) and 'Lys-36' (H3K36) of histone H3 to produce respectively trimethylated 'Lys-4' (H3K4me3) and trimethylated 'Lys-36' (H3K36me3) histone H3 and plays a key role in meiotic prophase by determining hotspot localization thereby promoting meiotic recombination. Can also methylate all four core histones with H3 being the best substrate and the most highly modified. Is also able, on one hand, to mono and di-methylate H4K20 and on other hand to trimethylate H3K9 with the di-methylated H3K9 as the best substrate. During meiotic prophase, binds specific DNA sequences through its zinc finger domains thereby determining hotspot localization where it promotes local H3K4me3 and H3K36me3 enrichment on the same nucleosomes through its histone methyltransferase activity. Thereby promotes double-stranded breaks (DSB) formation, at this subset of PRDM9-binding sites, that initiates meiotic recombination for the proper meiotic progression. During meiotic progression hotspot-bound PRDM9 interacts with several complexes; in early leptonema binds CDYL and EHMT2 followed by EWSR1 and CXXC1 by the end of leptonema. EWSR1 joins PRDM9 with the chromosomal axis through REC8. In this way, controls the DSB repair pathway, pairing of homologous chromosomes and sex body formation. Moreover plays a central role in the transcriptional activation of genes during early meiotic prophase thanks to H3K4me3 and H3K36me3 enrichment that represents a specific tag for epigenetic transcriptional activation. In addition performs automethylation. Acetylation and phosphorylation of histone H3 attenuate or prevent histone H3 methylation.</text>
</comment>
<comment type="catalytic activity">
    <reaction evidence="1">
        <text>L-lysyl-[protein] + S-adenosyl-L-methionine = N(6)-methyl-L-lysyl-[protein] + S-adenosyl-L-homocysteine + H(+)</text>
        <dbReference type="Rhea" id="RHEA:51736"/>
        <dbReference type="Rhea" id="RHEA-COMP:9752"/>
        <dbReference type="Rhea" id="RHEA-COMP:13053"/>
        <dbReference type="ChEBI" id="CHEBI:15378"/>
        <dbReference type="ChEBI" id="CHEBI:29969"/>
        <dbReference type="ChEBI" id="CHEBI:57856"/>
        <dbReference type="ChEBI" id="CHEBI:59789"/>
        <dbReference type="ChEBI" id="CHEBI:61929"/>
    </reaction>
    <physiologicalReaction direction="left-to-right" evidence="1">
        <dbReference type="Rhea" id="RHEA:51737"/>
    </physiologicalReaction>
</comment>
<comment type="catalytic activity">
    <reaction evidence="1">
        <text>N(6)-methyl-L-lysyl-[protein] + S-adenosyl-L-methionine = N(6),N(6)-dimethyl-L-lysyl-[protein] + S-adenosyl-L-homocysteine + H(+)</text>
        <dbReference type="Rhea" id="RHEA:54196"/>
        <dbReference type="Rhea" id="RHEA-COMP:13053"/>
        <dbReference type="Rhea" id="RHEA-COMP:13827"/>
        <dbReference type="ChEBI" id="CHEBI:15378"/>
        <dbReference type="ChEBI" id="CHEBI:57856"/>
        <dbReference type="ChEBI" id="CHEBI:59789"/>
        <dbReference type="ChEBI" id="CHEBI:61929"/>
        <dbReference type="ChEBI" id="CHEBI:61976"/>
    </reaction>
    <physiologicalReaction direction="left-to-right" evidence="1">
        <dbReference type="Rhea" id="RHEA:54197"/>
    </physiologicalReaction>
</comment>
<comment type="catalytic activity">
    <reaction evidence="2">
        <text>L-lysyl(4)-[histone H3] + 3 S-adenosyl-L-methionine = N(6),N(6),N(6)-trimethyl-L-lysyl(4)-[histone H3] + 3 S-adenosyl-L-homocysteine + 3 H(+)</text>
        <dbReference type="Rhea" id="RHEA:60260"/>
        <dbReference type="Rhea" id="RHEA-COMP:15537"/>
        <dbReference type="Rhea" id="RHEA-COMP:15547"/>
        <dbReference type="ChEBI" id="CHEBI:15378"/>
        <dbReference type="ChEBI" id="CHEBI:29969"/>
        <dbReference type="ChEBI" id="CHEBI:57856"/>
        <dbReference type="ChEBI" id="CHEBI:59789"/>
        <dbReference type="ChEBI" id="CHEBI:61961"/>
        <dbReference type="EC" id="2.1.1.354"/>
    </reaction>
    <physiologicalReaction direction="left-to-right" evidence="2">
        <dbReference type="Rhea" id="RHEA:60261"/>
    </physiologicalReaction>
</comment>
<comment type="catalytic activity">
    <reaction evidence="2">
        <text>L-lysyl(36)-[histone H3] + 3 S-adenosyl-L-methionine = N(6),N(6),N(6)-trimethyl-L-lysyl(36)-[histone H3] + 3 S-adenosyl-L-homocysteine + 3 H(+)</text>
        <dbReference type="Rhea" id="RHEA:60324"/>
        <dbReference type="Rhea" id="RHEA-COMP:9785"/>
        <dbReference type="Rhea" id="RHEA-COMP:15536"/>
        <dbReference type="ChEBI" id="CHEBI:15378"/>
        <dbReference type="ChEBI" id="CHEBI:29969"/>
        <dbReference type="ChEBI" id="CHEBI:57856"/>
        <dbReference type="ChEBI" id="CHEBI:59789"/>
        <dbReference type="ChEBI" id="CHEBI:61961"/>
        <dbReference type="EC" id="2.1.1.359"/>
    </reaction>
    <physiologicalReaction direction="left-to-right" evidence="2">
        <dbReference type="Rhea" id="RHEA:60325"/>
    </physiologicalReaction>
</comment>
<comment type="catalytic activity">
    <reaction evidence="1">
        <text>L-lysyl(9)-[histone H3] + 3 S-adenosyl-L-methionine = N(6),N(6),N(6)-trimethyl-L-lysyl(9)-[histone H3] + 3 S-adenosyl-L-homocysteine + 3 H(+)</text>
        <dbReference type="Rhea" id="RHEA:60276"/>
        <dbReference type="Rhea" id="RHEA-COMP:15538"/>
        <dbReference type="Rhea" id="RHEA-COMP:15546"/>
        <dbReference type="ChEBI" id="CHEBI:15378"/>
        <dbReference type="ChEBI" id="CHEBI:29969"/>
        <dbReference type="ChEBI" id="CHEBI:57856"/>
        <dbReference type="ChEBI" id="CHEBI:59789"/>
        <dbReference type="ChEBI" id="CHEBI:61961"/>
        <dbReference type="EC" id="2.1.1.355"/>
    </reaction>
    <physiologicalReaction direction="left-to-right" evidence="1">
        <dbReference type="Rhea" id="RHEA:60277"/>
    </physiologicalReaction>
</comment>
<comment type="catalytic activity">
    <reaction evidence="1">
        <text>L-lysyl(20)-[histone H4] + S-adenosyl-L-methionine = N(6)-methyl-L-lysyl(20)-[histone H4] + S-adenosyl-L-homocysteine + H(+)</text>
        <dbReference type="Rhea" id="RHEA:60344"/>
        <dbReference type="Rhea" id="RHEA-COMP:15554"/>
        <dbReference type="Rhea" id="RHEA-COMP:15555"/>
        <dbReference type="ChEBI" id="CHEBI:15378"/>
        <dbReference type="ChEBI" id="CHEBI:29969"/>
        <dbReference type="ChEBI" id="CHEBI:57856"/>
        <dbReference type="ChEBI" id="CHEBI:59789"/>
        <dbReference type="ChEBI" id="CHEBI:61929"/>
        <dbReference type="EC" id="2.1.1.361"/>
    </reaction>
    <physiologicalReaction direction="left-to-right" evidence="1">
        <dbReference type="Rhea" id="RHEA:60345"/>
    </physiologicalReaction>
</comment>
<comment type="catalytic activity">
    <reaction evidence="1">
        <text>N(6)-methyl-L-lysyl(20)-[histone H4] + S-adenosyl-L-methionine = N(6),N(6)-dimethyl-L-lysyl(20)-[histone H4] + S-adenosyl-L-homocysteine + H(+)</text>
        <dbReference type="Rhea" id="RHEA:60348"/>
        <dbReference type="Rhea" id="RHEA-COMP:15555"/>
        <dbReference type="Rhea" id="RHEA-COMP:15556"/>
        <dbReference type="ChEBI" id="CHEBI:15378"/>
        <dbReference type="ChEBI" id="CHEBI:57856"/>
        <dbReference type="ChEBI" id="CHEBI:59789"/>
        <dbReference type="ChEBI" id="CHEBI:61929"/>
        <dbReference type="ChEBI" id="CHEBI:61976"/>
        <dbReference type="EC" id="2.1.1.362"/>
    </reaction>
    <physiologicalReaction direction="left-to-right" evidence="1">
        <dbReference type="Rhea" id="RHEA:60349"/>
    </physiologicalReaction>
</comment>
<comment type="subunit">
    <text evidence="1">Homodimer.</text>
</comment>
<comment type="subcellular location">
    <subcellularLocation>
        <location evidence="1">Nucleus</location>
    </subcellularLocation>
    <subcellularLocation>
        <location evidence="1">Chromosome</location>
    </subcellularLocation>
    <text evidence="1">Localizes in nuclei of pre-leptotene, leptotene, and early to mid-zygotene spermatocytes.</text>
</comment>
<comment type="domain">
    <text evidence="1">The C2H2-type zinc fingers determines the hotspot localization through its binding to specific DNA sequences. Variations in their sequence affects affinity towards DNA-binding motif.</text>
</comment>
<comment type="PTM">
    <text evidence="1">Mono-methylated; automethylated. Tri-methylated; automethylated.</text>
</comment>
<comment type="similarity">
    <text evidence="4">Belongs to the class V-like SAM-binding methyltransferase superfamily.</text>
</comment>
<feature type="chain" id="PRO_0000363962" description="Histone-lysine N-methyltransferase PRDM9">
    <location>
        <begin position="1"/>
        <end position="853"/>
    </location>
</feature>
<feature type="domain" description="SET" evidence="4">
    <location>
        <begin position="83"/>
        <end position="197"/>
    </location>
</feature>
<feature type="zinc finger region" description="C2H2-type 1" evidence="3">
    <location>
        <begin position="230"/>
        <end position="253"/>
    </location>
</feature>
<feature type="zinc finger region" description="C2H2-type 2" evidence="3">
    <location>
        <begin position="337"/>
        <end position="360"/>
    </location>
</feature>
<feature type="zinc finger region" description="C2H2-type 3" evidence="3">
    <location>
        <begin position="366"/>
        <end position="388"/>
    </location>
</feature>
<feature type="zinc finger region" description="C2H2-type 4" evidence="3">
    <location>
        <begin position="405"/>
        <end position="428"/>
    </location>
</feature>
<feature type="zinc finger region" description="C2H2-type 5; degenerate" evidence="3">
    <location>
        <begin position="508"/>
        <end position="528"/>
    </location>
</feature>
<feature type="zinc finger region" description="C2H2-type 6; degenerate" evidence="3">
    <location>
        <begin position="547"/>
        <end position="569"/>
    </location>
</feature>
<feature type="zinc finger region" description="C2H2-type 7" evidence="3">
    <location>
        <begin position="575"/>
        <end position="598"/>
    </location>
</feature>
<feature type="zinc finger region" description="C2H2-type 8" evidence="3">
    <location>
        <begin position="604"/>
        <end position="626"/>
    </location>
</feature>
<feature type="zinc finger region" description="C2H2-type 9" evidence="3">
    <location>
        <begin position="644"/>
        <end position="666"/>
    </location>
</feature>
<feature type="zinc finger region" description="C2H2-type 10; degenerate" evidence="3">
    <location>
        <begin position="689"/>
        <end position="711"/>
    </location>
</feature>
<feature type="zinc finger region" description="C2H2-type 11" evidence="3">
    <location>
        <begin position="717"/>
        <end position="739"/>
    </location>
</feature>
<feature type="zinc finger region" description="C2H2-type 12" evidence="3">
    <location>
        <begin position="745"/>
        <end position="767"/>
    </location>
</feature>
<feature type="zinc finger region" description="C2H2-type 13" evidence="3">
    <location>
        <begin position="773"/>
        <end position="795"/>
    </location>
</feature>
<feature type="zinc finger region" description="C2H2-type 14" evidence="3">
    <location>
        <begin position="801"/>
        <end position="823"/>
    </location>
</feature>
<feature type="zinc finger region" description="C2H2-type 15" evidence="3">
    <location>
        <begin position="829"/>
        <end position="852"/>
    </location>
</feature>
<feature type="region of interest" description="Disordered" evidence="5">
    <location>
        <begin position="291"/>
        <end position="322"/>
    </location>
</feature>
<feature type="region of interest" description="Disordered" evidence="5">
    <location>
        <begin position="447"/>
        <end position="496"/>
    </location>
</feature>
<feature type="region of interest" description="DNA-binding" evidence="2">
    <location>
        <begin position="755"/>
        <end position="845"/>
    </location>
</feature>
<feature type="compositionally biased region" description="Polar residues" evidence="5">
    <location>
        <begin position="291"/>
        <end position="314"/>
    </location>
</feature>
<feature type="compositionally biased region" description="Basic and acidic residues" evidence="5">
    <location>
        <begin position="450"/>
        <end position="459"/>
    </location>
</feature>
<feature type="binding site" evidence="1">
    <location>
        <begin position="127"/>
        <end position="133"/>
    </location>
    <ligand>
        <name>substrate</name>
    </ligand>
</feature>
<feature type="binding site" evidence="1">
    <location>
        <position position="196"/>
    </location>
    <ligand>
        <name>substrate</name>
    </ligand>
</feature>
<feature type="binding site" evidence="1">
    <location>
        <position position="235"/>
    </location>
    <ligand>
        <name>Zn(2+)</name>
        <dbReference type="ChEBI" id="CHEBI:29105"/>
        <label>1</label>
    </ligand>
</feature>
<feature type="binding site" evidence="1">
    <location>
        <begin position="275"/>
        <end position="277"/>
    </location>
    <ligand>
        <name>S-adenosyl-L-methionine</name>
        <dbReference type="ChEBI" id="CHEBI:59789"/>
    </ligand>
</feature>
<feature type="binding site" evidence="1">
    <location>
        <begin position="341"/>
        <end position="342"/>
    </location>
    <ligand>
        <name>S-adenosyl-L-methionine</name>
        <dbReference type="ChEBI" id="CHEBI:59789"/>
    </ligand>
</feature>
<feature type="binding site" evidence="2">
    <location>
        <position position="407"/>
    </location>
    <ligand>
        <name>Zn(2+)</name>
        <dbReference type="ChEBI" id="CHEBI:29105"/>
        <label>2</label>
    </ligand>
</feature>
<feature type="binding site" evidence="2">
    <location>
        <position position="410"/>
    </location>
    <ligand>
        <name>Zn(2+)</name>
        <dbReference type="ChEBI" id="CHEBI:29105"/>
        <label>2</label>
    </ligand>
</feature>
<feature type="binding site" evidence="2">
    <location>
        <position position="423"/>
    </location>
    <ligand>
        <name>Zn(2+)</name>
        <dbReference type="ChEBI" id="CHEBI:29105"/>
        <label>2</label>
    </ligand>
</feature>
<feature type="binding site" evidence="2">
    <location>
        <position position="428"/>
    </location>
    <ligand>
        <name>Zn(2+)</name>
        <dbReference type="ChEBI" id="CHEBI:29105"/>
        <label>2</label>
    </ligand>
</feature>
<feature type="binding site" evidence="2">
    <location>
        <position position="747"/>
    </location>
    <ligand>
        <name>Zn(2+)</name>
        <dbReference type="ChEBI" id="CHEBI:29105"/>
        <label>3</label>
    </ligand>
</feature>
<feature type="binding site" evidence="2">
    <location>
        <position position="750"/>
    </location>
    <ligand>
        <name>Zn(2+)</name>
        <dbReference type="ChEBI" id="CHEBI:29105"/>
        <label>3</label>
    </ligand>
</feature>
<feature type="binding site" evidence="2">
    <location>
        <position position="763"/>
    </location>
    <ligand>
        <name>Zn(2+)</name>
        <dbReference type="ChEBI" id="CHEBI:29105"/>
        <label>3</label>
    </ligand>
</feature>
<feature type="binding site" evidence="2">
    <location>
        <position position="767"/>
    </location>
    <ligand>
        <name>Zn(2+)</name>
        <dbReference type="ChEBI" id="CHEBI:29105"/>
        <label>3</label>
    </ligand>
</feature>
<feature type="binding site" evidence="2">
    <location>
        <position position="775"/>
    </location>
    <ligand>
        <name>Zn(2+)</name>
        <dbReference type="ChEBI" id="CHEBI:29105"/>
        <label>4</label>
    </ligand>
</feature>
<feature type="binding site" evidence="2">
    <location>
        <position position="778"/>
    </location>
    <ligand>
        <name>Zn(2+)</name>
        <dbReference type="ChEBI" id="CHEBI:29105"/>
        <label>4</label>
    </ligand>
</feature>
<feature type="binding site" evidence="2">
    <location>
        <position position="791"/>
    </location>
    <ligand>
        <name>Zn(2+)</name>
        <dbReference type="ChEBI" id="CHEBI:29105"/>
        <label>4</label>
    </ligand>
</feature>
<feature type="binding site" evidence="2">
    <location>
        <position position="795"/>
    </location>
    <ligand>
        <name>Zn(2+)</name>
        <dbReference type="ChEBI" id="CHEBI:29105"/>
        <label>4</label>
    </ligand>
</feature>
<feature type="binding site" evidence="2">
    <location>
        <position position="803"/>
    </location>
    <ligand>
        <name>Zn(2+)</name>
        <dbReference type="ChEBI" id="CHEBI:29105"/>
        <label>5</label>
    </ligand>
</feature>
<feature type="binding site" evidence="2">
    <location>
        <position position="806"/>
    </location>
    <ligand>
        <name>Zn(2+)</name>
        <dbReference type="ChEBI" id="CHEBI:29105"/>
        <label>5</label>
    </ligand>
</feature>
<feature type="binding site" evidence="2">
    <location>
        <position position="819"/>
    </location>
    <ligand>
        <name>Zn(2+)</name>
        <dbReference type="ChEBI" id="CHEBI:29105"/>
        <label>5</label>
    </ligand>
</feature>
<feature type="binding site" evidence="2">
    <location>
        <position position="823"/>
    </location>
    <ligand>
        <name>Zn(2+)</name>
        <dbReference type="ChEBI" id="CHEBI:29105"/>
        <label>5</label>
    </ligand>
</feature>
<feature type="binding site" evidence="2">
    <location>
        <position position="831"/>
    </location>
    <ligand>
        <name>Zn(2+)</name>
        <dbReference type="ChEBI" id="CHEBI:29105"/>
        <label>6</label>
    </ligand>
</feature>
<feature type="binding site" evidence="2">
    <location>
        <position position="834"/>
    </location>
    <ligand>
        <name>Zn(2+)</name>
        <dbReference type="ChEBI" id="CHEBI:29105"/>
        <label>6</label>
    </ligand>
</feature>
<feature type="binding site" evidence="2">
    <location>
        <position position="847"/>
    </location>
    <ligand>
        <name>Zn(2+)</name>
        <dbReference type="ChEBI" id="CHEBI:29105"/>
        <label>6</label>
    </ligand>
</feature>
<reference key="1">
    <citation type="submission" date="2003-12" db="EMBL/GenBank/DDBJ databases">
        <authorList>
            <consortium name="NIH - Zebrafish Gene Collection (ZGC) project"/>
        </authorList>
    </citation>
    <scope>NUCLEOTIDE SEQUENCE [LARGE SCALE MRNA]</scope>
    <source>
        <tissue>Kidney</tissue>
    </source>
</reference>
<reference key="2">
    <citation type="journal article" date="2008" name="PLoS ONE">
        <title>Genome-wide survey and developmental expression mapping of zebrafish SET domain-containing genes.</title>
        <authorList>
            <person name="Sun X.-J."/>
            <person name="Xu P.-F."/>
            <person name="Zhou T."/>
            <person name="Hu M."/>
            <person name="Fu C.-T."/>
            <person name="Zhang Y."/>
            <person name="Jin Y."/>
            <person name="Chen Y."/>
            <person name="Chen S.-J."/>
            <person name="Huang Q.-H."/>
            <person name="Liu T.X."/>
            <person name="Chen Z."/>
        </authorList>
    </citation>
    <scope>NUCLEOTIDE SEQUENCE [MRNA] OF 763-853</scope>
</reference>
<organism>
    <name type="scientific">Danio rerio</name>
    <name type="common">Zebrafish</name>
    <name type="synonym">Brachydanio rerio</name>
    <dbReference type="NCBI Taxonomy" id="7955"/>
    <lineage>
        <taxon>Eukaryota</taxon>
        <taxon>Metazoa</taxon>
        <taxon>Chordata</taxon>
        <taxon>Craniata</taxon>
        <taxon>Vertebrata</taxon>
        <taxon>Euteleostomi</taxon>
        <taxon>Actinopterygii</taxon>
        <taxon>Neopterygii</taxon>
        <taxon>Teleostei</taxon>
        <taxon>Ostariophysi</taxon>
        <taxon>Cypriniformes</taxon>
        <taxon>Danionidae</taxon>
        <taxon>Danioninae</taxon>
        <taxon>Danio</taxon>
    </lineage>
</organism>
<dbReference type="EC" id="2.1.1.-" evidence="1"/>
<dbReference type="EC" id="2.1.1.359" evidence="1"/>
<dbReference type="EC" id="2.1.1.354" evidence="1"/>
<dbReference type="EC" id="2.1.1.355" evidence="1"/>
<dbReference type="EC" id="2.1.1.362" evidence="1"/>
<dbReference type="EC" id="2.1.1.361" evidence="1"/>
<dbReference type="EMBL" id="BC064665">
    <property type="protein sequence ID" value="AAH64665.1"/>
    <property type="molecule type" value="mRNA"/>
</dbReference>
<dbReference type="EMBL" id="DQ851831">
    <property type="protein sequence ID" value="ABI34500.1"/>
    <property type="molecule type" value="mRNA"/>
</dbReference>
<dbReference type="RefSeq" id="NP_957196.1">
    <property type="nucleotide sequence ID" value="NM_200902.1"/>
</dbReference>
<dbReference type="SMR" id="Q6P2A1"/>
<dbReference type="FunCoup" id="Q6P2A1">
    <property type="interactions" value="200"/>
</dbReference>
<dbReference type="STRING" id="7955.ENSDARP00000026323"/>
<dbReference type="PaxDb" id="7955-ENSDARP00000026323"/>
<dbReference type="Ensembl" id="ENSDART00000027321">
    <property type="protein sequence ID" value="ENSDARP00000026323"/>
    <property type="gene ID" value="ENSDARG00000005382"/>
</dbReference>
<dbReference type="Ensembl" id="ENSDART00000180739">
    <property type="protein sequence ID" value="ENSDARP00000148547"/>
    <property type="gene ID" value="ENSDARG00000110150"/>
</dbReference>
<dbReference type="GeneID" id="393876"/>
<dbReference type="KEGG" id="dre:393876"/>
<dbReference type="AGR" id="ZFIN:ZDB-GENE-040426-1319"/>
<dbReference type="CTD" id="56979"/>
<dbReference type="ZFIN" id="ZDB-GENE-040426-1319">
    <property type="gene designation" value="prdm9"/>
</dbReference>
<dbReference type="eggNOG" id="KOG1721">
    <property type="taxonomic scope" value="Eukaryota"/>
</dbReference>
<dbReference type="eggNOG" id="KOG2461">
    <property type="taxonomic scope" value="Eukaryota"/>
</dbReference>
<dbReference type="HOGENOM" id="CLU_002678_32_1_1"/>
<dbReference type="InParanoid" id="Q6P2A1"/>
<dbReference type="OMA" id="AFNQEIH"/>
<dbReference type="OrthoDB" id="9439903at2759"/>
<dbReference type="PhylomeDB" id="Q6P2A1"/>
<dbReference type="TreeFam" id="TF315885"/>
<dbReference type="PRO" id="PR:Q6P2A1"/>
<dbReference type="Proteomes" id="UP000000437">
    <property type="component" value="Alternate scaffold 12"/>
</dbReference>
<dbReference type="Proteomes" id="UP000000437">
    <property type="component" value="Chromosome 12"/>
</dbReference>
<dbReference type="Bgee" id="ENSDARG00000005382">
    <property type="expression patterns" value="Expressed in blastula and 22 other cell types or tissues"/>
</dbReference>
<dbReference type="ExpressionAtlas" id="Q6P2A1">
    <property type="expression patterns" value="baseline"/>
</dbReference>
<dbReference type="GO" id="GO:0005694">
    <property type="term" value="C:chromosome"/>
    <property type="evidence" value="ECO:0007669"/>
    <property type="project" value="UniProtKB-SubCell"/>
</dbReference>
<dbReference type="GO" id="GO:0005634">
    <property type="term" value="C:nucleus"/>
    <property type="evidence" value="ECO:0000250"/>
    <property type="project" value="UniProtKB"/>
</dbReference>
<dbReference type="GO" id="GO:0046975">
    <property type="term" value="F:histone H3K36 methyltransferase activity"/>
    <property type="evidence" value="ECO:0000250"/>
    <property type="project" value="UniProtKB"/>
</dbReference>
<dbReference type="GO" id="GO:0140955">
    <property type="term" value="F:histone H3K36 trimethyltransferase activity"/>
    <property type="evidence" value="ECO:0007669"/>
    <property type="project" value="UniProtKB-EC"/>
</dbReference>
<dbReference type="GO" id="GO:0042800">
    <property type="term" value="F:histone H3K4 methyltransferase activity"/>
    <property type="evidence" value="ECO:0000250"/>
    <property type="project" value="UniProtKB"/>
</dbReference>
<dbReference type="GO" id="GO:0140999">
    <property type="term" value="F:histone H3K4 trimethyltransferase activity"/>
    <property type="evidence" value="ECO:0007669"/>
    <property type="project" value="UniProtKB-EC"/>
</dbReference>
<dbReference type="GO" id="GO:0140949">
    <property type="term" value="F:histone H3K9 trimethyltransferase activity"/>
    <property type="evidence" value="ECO:0007669"/>
    <property type="project" value="UniProtKB-EC"/>
</dbReference>
<dbReference type="GO" id="GO:0140944">
    <property type="term" value="F:histone H4K20 monomethyltransferase activity"/>
    <property type="evidence" value="ECO:0007669"/>
    <property type="project" value="UniProtKB-EC"/>
</dbReference>
<dbReference type="GO" id="GO:0140941">
    <property type="term" value="F:histone H4K20me methyltransferase activity"/>
    <property type="evidence" value="ECO:0007669"/>
    <property type="project" value="UniProtKB-EC"/>
</dbReference>
<dbReference type="GO" id="GO:0042803">
    <property type="term" value="F:protein homodimerization activity"/>
    <property type="evidence" value="ECO:0000250"/>
    <property type="project" value="UniProtKB"/>
</dbReference>
<dbReference type="GO" id="GO:0010844">
    <property type="term" value="F:recombination hotspot binding"/>
    <property type="evidence" value="ECO:0000250"/>
    <property type="project" value="UniProtKB"/>
</dbReference>
<dbReference type="GO" id="GO:0008270">
    <property type="term" value="F:zinc ion binding"/>
    <property type="evidence" value="ECO:0007669"/>
    <property type="project" value="UniProtKB-KW"/>
</dbReference>
<dbReference type="GO" id="GO:1990918">
    <property type="term" value="P:double-strand break repair involved in meiotic recombination"/>
    <property type="evidence" value="ECO:0000250"/>
    <property type="project" value="UniProtKB"/>
</dbReference>
<dbReference type="GO" id="GO:0007292">
    <property type="term" value="P:female gamete generation"/>
    <property type="evidence" value="ECO:0000250"/>
    <property type="project" value="UniProtKB"/>
</dbReference>
<dbReference type="GO" id="GO:0007129">
    <property type="term" value="P:homologous chromosome pairing at meiosis"/>
    <property type="evidence" value="ECO:0000250"/>
    <property type="project" value="UniProtKB"/>
</dbReference>
<dbReference type="GO" id="GO:0048232">
    <property type="term" value="P:male gamete generation"/>
    <property type="evidence" value="ECO:0000250"/>
    <property type="project" value="UniProtKB"/>
</dbReference>
<dbReference type="GO" id="GO:0032259">
    <property type="term" value="P:methylation"/>
    <property type="evidence" value="ECO:0007669"/>
    <property type="project" value="UniProtKB-KW"/>
</dbReference>
<dbReference type="GO" id="GO:0043066">
    <property type="term" value="P:negative regulation of apoptotic process"/>
    <property type="evidence" value="ECO:0000250"/>
    <property type="project" value="UniProtKB"/>
</dbReference>
<dbReference type="GO" id="GO:1905516">
    <property type="term" value="P:positive regulation of fertilization"/>
    <property type="evidence" value="ECO:0000250"/>
    <property type="project" value="UniProtKB"/>
</dbReference>
<dbReference type="GO" id="GO:0010468">
    <property type="term" value="P:regulation of gene expression"/>
    <property type="evidence" value="ECO:0000318"/>
    <property type="project" value="GO_Central"/>
</dbReference>
<dbReference type="CDD" id="cd19193">
    <property type="entry name" value="PR-SET_PRDM7_9"/>
    <property type="match status" value="1"/>
</dbReference>
<dbReference type="FunFam" id="3.30.160.60:FF:005252">
    <property type="match status" value="1"/>
</dbReference>
<dbReference type="FunFam" id="2.170.270.10:FF:000031">
    <property type="entry name" value="probable histone-lysine N-methyltransferase PRDM7"/>
    <property type="match status" value="1"/>
</dbReference>
<dbReference type="FunFam" id="3.30.160.60:FF:000100">
    <property type="entry name" value="Zinc finger 45-like"/>
    <property type="match status" value="1"/>
</dbReference>
<dbReference type="FunFam" id="3.30.160.60:FF:000218">
    <property type="entry name" value="Zinc finger protein 10"/>
    <property type="match status" value="1"/>
</dbReference>
<dbReference type="FunFam" id="3.30.160.60:FF:000196">
    <property type="entry name" value="Zinc finger protein 1026"/>
    <property type="match status" value="1"/>
</dbReference>
<dbReference type="FunFam" id="3.30.160.60:FF:002343">
    <property type="entry name" value="Zinc finger protein 33A"/>
    <property type="match status" value="1"/>
</dbReference>
<dbReference type="FunFam" id="3.30.160.60:FF:001289">
    <property type="entry name" value="Zinc finger protein 574"/>
    <property type="match status" value="1"/>
</dbReference>
<dbReference type="FunFam" id="3.30.160.60:FF:001310">
    <property type="entry name" value="zinc finger protein 664"/>
    <property type="match status" value="1"/>
</dbReference>
<dbReference type="FunFam" id="3.30.160.60:FF:000110">
    <property type="entry name" value="Zinc finger protein-like"/>
    <property type="match status" value="1"/>
</dbReference>
<dbReference type="Gene3D" id="3.30.160.60">
    <property type="entry name" value="Classic Zinc Finger"/>
    <property type="match status" value="12"/>
</dbReference>
<dbReference type="Gene3D" id="2.170.270.10">
    <property type="entry name" value="SET domain"/>
    <property type="match status" value="1"/>
</dbReference>
<dbReference type="InterPro" id="IPR044417">
    <property type="entry name" value="PRDM7_9_PR-SET"/>
</dbReference>
<dbReference type="InterPro" id="IPR001214">
    <property type="entry name" value="SET_dom"/>
</dbReference>
<dbReference type="InterPro" id="IPR046341">
    <property type="entry name" value="SET_dom_sf"/>
</dbReference>
<dbReference type="InterPro" id="IPR036236">
    <property type="entry name" value="Znf_C2H2_sf"/>
</dbReference>
<dbReference type="InterPro" id="IPR013087">
    <property type="entry name" value="Znf_C2H2_type"/>
</dbReference>
<dbReference type="PANTHER" id="PTHR24408">
    <property type="entry name" value="ZINC FINGER PROTEIN"/>
    <property type="match status" value="1"/>
</dbReference>
<dbReference type="PANTHER" id="PTHR24408:SF34">
    <property type="entry name" value="ZINC FINGER PROTEIN 672-RELATED"/>
    <property type="match status" value="1"/>
</dbReference>
<dbReference type="Pfam" id="PF21549">
    <property type="entry name" value="PRDM2_PR"/>
    <property type="match status" value="1"/>
</dbReference>
<dbReference type="Pfam" id="PF00096">
    <property type="entry name" value="zf-C2H2"/>
    <property type="match status" value="7"/>
</dbReference>
<dbReference type="SMART" id="SM00355">
    <property type="entry name" value="ZnF_C2H2"/>
    <property type="match status" value="13"/>
</dbReference>
<dbReference type="SUPFAM" id="SSF57667">
    <property type="entry name" value="beta-beta-alpha zinc fingers"/>
    <property type="match status" value="6"/>
</dbReference>
<dbReference type="PROSITE" id="PS50280">
    <property type="entry name" value="SET"/>
    <property type="match status" value="1"/>
</dbReference>
<dbReference type="PROSITE" id="PS00028">
    <property type="entry name" value="ZINC_FINGER_C2H2_1"/>
    <property type="match status" value="12"/>
</dbReference>
<dbReference type="PROSITE" id="PS50157">
    <property type="entry name" value="ZINC_FINGER_C2H2_2"/>
    <property type="match status" value="12"/>
</dbReference>
<evidence type="ECO:0000250" key="1">
    <source>
        <dbReference type="UniProtKB" id="Q96EQ9"/>
    </source>
</evidence>
<evidence type="ECO:0000250" key="2">
    <source>
        <dbReference type="UniProtKB" id="Q9NQV7"/>
    </source>
</evidence>
<evidence type="ECO:0000255" key="3">
    <source>
        <dbReference type="PROSITE-ProRule" id="PRU00042"/>
    </source>
</evidence>
<evidence type="ECO:0000255" key="4">
    <source>
        <dbReference type="PROSITE-ProRule" id="PRU00190"/>
    </source>
</evidence>
<evidence type="ECO:0000256" key="5">
    <source>
        <dbReference type="SAM" id="MobiDB-lite"/>
    </source>
</evidence>
<protein>
    <recommendedName>
        <fullName evidence="1">Histone-lysine N-methyltransferase PRDM9</fullName>
    </recommendedName>
    <alternativeName>
        <fullName>PR domain zinc finger protein 9</fullName>
    </alternativeName>
    <alternativeName>
        <fullName>PR domain-containing protein 9</fullName>
    </alternativeName>
    <alternativeName>
        <fullName evidence="1">Protein-lysine N-methyltransferase PRDM9</fullName>
        <ecNumber evidence="1">2.1.1.-</ecNumber>
    </alternativeName>
    <alternativeName>
        <fullName evidence="1">[histone H3]-lysine36 N-trimethyltransferase PRDM9</fullName>
        <ecNumber evidence="1">2.1.1.359</ecNumber>
    </alternativeName>
    <alternativeName>
        <fullName evidence="1">[histone H3]-lysine4 N-trimethyltransferase PRDM9</fullName>
        <ecNumber evidence="1">2.1.1.354</ecNumber>
    </alternativeName>
    <alternativeName>
        <fullName evidence="1">[histone H3]-lysine9 N-trimethyltransferase PRDM9</fullName>
        <ecNumber evidence="1">2.1.1.355</ecNumber>
    </alternativeName>
    <alternativeName>
        <fullName evidence="1">[histone H4]-N-methyl-L-lysine20 N-methyltransferase PRDM9</fullName>
        <ecNumber evidence="1">2.1.1.362</ecNumber>
    </alternativeName>
    <alternativeName>
        <fullName evidence="1">[histone H4]-lysine20 N-methyltransferase PRDM9</fullName>
        <ecNumber evidence="1">2.1.1.361</ecNumber>
    </alternativeName>
</protein>
<keyword id="KW-0010">Activator</keyword>
<keyword id="KW-0156">Chromatin regulator</keyword>
<keyword id="KW-0158">Chromosome</keyword>
<keyword id="KW-0238">DNA-binding</keyword>
<keyword id="KW-0469">Meiosis</keyword>
<keyword id="KW-0479">Metal-binding</keyword>
<keyword id="KW-0489">Methyltransferase</keyword>
<keyword id="KW-0539">Nucleus</keyword>
<keyword id="KW-1185">Reference proteome</keyword>
<keyword id="KW-0677">Repeat</keyword>
<keyword id="KW-0949">S-adenosyl-L-methionine</keyword>
<keyword id="KW-0804">Transcription</keyword>
<keyword id="KW-0805">Transcription regulation</keyword>
<keyword id="KW-0808">Transferase</keyword>
<keyword id="KW-0862">Zinc</keyword>
<keyword id="KW-0863">Zinc-finger</keyword>